<accession>Q031I3</accession>
<sequence>MKENYNYPLDLSWSTTEMTEVLSFFNQVEKFYESKVEKELFLESYAAFKKVVPSKMQEKQLGRDFEQSSGYSLYRALKEVEASGKRFVSADKA</sequence>
<dbReference type="EMBL" id="CP000425">
    <property type="protein sequence ID" value="ABJ72139.1"/>
    <property type="molecule type" value="Genomic_DNA"/>
</dbReference>
<dbReference type="RefSeq" id="WP_011675557.1">
    <property type="nucleotide sequence ID" value="NC_008527.1"/>
</dbReference>
<dbReference type="SMR" id="Q031I3"/>
<dbReference type="KEGG" id="llc:LACR_0546"/>
<dbReference type="HOGENOM" id="CLU_166693_0_0_9"/>
<dbReference type="Proteomes" id="UP000000240">
    <property type="component" value="Chromosome"/>
</dbReference>
<dbReference type="Gene3D" id="1.10.220.80">
    <property type="entry name" value="BH2638-like"/>
    <property type="match status" value="1"/>
</dbReference>
<dbReference type="HAMAP" id="MF_01041">
    <property type="entry name" value="UPF0223"/>
    <property type="match status" value="1"/>
</dbReference>
<dbReference type="InterPro" id="IPR023324">
    <property type="entry name" value="BH2638-like_sf"/>
</dbReference>
<dbReference type="InterPro" id="IPR007920">
    <property type="entry name" value="UPF0223"/>
</dbReference>
<dbReference type="NCBIfam" id="NF003353">
    <property type="entry name" value="PRK04387.1"/>
    <property type="match status" value="1"/>
</dbReference>
<dbReference type="Pfam" id="PF05256">
    <property type="entry name" value="UPF0223"/>
    <property type="match status" value="1"/>
</dbReference>
<dbReference type="PIRSF" id="PIRSF037260">
    <property type="entry name" value="UPF0223"/>
    <property type="match status" value="1"/>
</dbReference>
<dbReference type="SUPFAM" id="SSF158504">
    <property type="entry name" value="BH2638-like"/>
    <property type="match status" value="1"/>
</dbReference>
<name>Y546_LACLS</name>
<proteinExistence type="inferred from homology"/>
<feature type="chain" id="PRO_1000064142" description="UPF0223 protein LACR_0546">
    <location>
        <begin position="1"/>
        <end position="93"/>
    </location>
</feature>
<comment type="similarity">
    <text evidence="1">Belongs to the UPF0223 family.</text>
</comment>
<organism>
    <name type="scientific">Lactococcus lactis subsp. cremoris (strain SK11)</name>
    <dbReference type="NCBI Taxonomy" id="272622"/>
    <lineage>
        <taxon>Bacteria</taxon>
        <taxon>Bacillati</taxon>
        <taxon>Bacillota</taxon>
        <taxon>Bacilli</taxon>
        <taxon>Lactobacillales</taxon>
        <taxon>Streptococcaceae</taxon>
        <taxon>Lactococcus</taxon>
        <taxon>Lactococcus cremoris subsp. cremoris</taxon>
    </lineage>
</organism>
<reference key="1">
    <citation type="journal article" date="2006" name="Proc. Natl. Acad. Sci. U.S.A.">
        <title>Comparative genomics of the lactic acid bacteria.</title>
        <authorList>
            <person name="Makarova K.S."/>
            <person name="Slesarev A."/>
            <person name="Wolf Y.I."/>
            <person name="Sorokin A."/>
            <person name="Mirkin B."/>
            <person name="Koonin E.V."/>
            <person name="Pavlov A."/>
            <person name="Pavlova N."/>
            <person name="Karamychev V."/>
            <person name="Polouchine N."/>
            <person name="Shakhova V."/>
            <person name="Grigoriev I."/>
            <person name="Lou Y."/>
            <person name="Rohksar D."/>
            <person name="Lucas S."/>
            <person name="Huang K."/>
            <person name="Goodstein D.M."/>
            <person name="Hawkins T."/>
            <person name="Plengvidhya V."/>
            <person name="Welker D."/>
            <person name="Hughes J."/>
            <person name="Goh Y."/>
            <person name="Benson A."/>
            <person name="Baldwin K."/>
            <person name="Lee J.-H."/>
            <person name="Diaz-Muniz I."/>
            <person name="Dosti B."/>
            <person name="Smeianov V."/>
            <person name="Wechter W."/>
            <person name="Barabote R."/>
            <person name="Lorca G."/>
            <person name="Altermann E."/>
            <person name="Barrangou R."/>
            <person name="Ganesan B."/>
            <person name="Xie Y."/>
            <person name="Rawsthorne H."/>
            <person name="Tamir D."/>
            <person name="Parker C."/>
            <person name="Breidt F."/>
            <person name="Broadbent J.R."/>
            <person name="Hutkins R."/>
            <person name="O'Sullivan D."/>
            <person name="Steele J."/>
            <person name="Unlu G."/>
            <person name="Saier M.H. Jr."/>
            <person name="Klaenhammer T."/>
            <person name="Richardson P."/>
            <person name="Kozyavkin S."/>
            <person name="Weimer B.C."/>
            <person name="Mills D.A."/>
        </authorList>
    </citation>
    <scope>NUCLEOTIDE SEQUENCE [LARGE SCALE GENOMIC DNA]</scope>
    <source>
        <strain>SK11</strain>
    </source>
</reference>
<protein>
    <recommendedName>
        <fullName evidence="1">UPF0223 protein LACR_0546</fullName>
    </recommendedName>
</protein>
<evidence type="ECO:0000255" key="1">
    <source>
        <dbReference type="HAMAP-Rule" id="MF_01041"/>
    </source>
</evidence>
<gene>
    <name type="ordered locus">LACR_0546</name>
</gene>